<dbReference type="EMBL" id="CP000880">
    <property type="protein sequence ID" value="ABX23029.1"/>
    <property type="molecule type" value="Genomic_DNA"/>
</dbReference>
<dbReference type="SMR" id="A9MEW3"/>
<dbReference type="STRING" id="41514.SARI_03192"/>
<dbReference type="KEGG" id="ses:SARI_03192"/>
<dbReference type="HOGENOM" id="CLU_128576_0_0_6"/>
<dbReference type="Proteomes" id="UP000002084">
    <property type="component" value="Chromosome"/>
</dbReference>
<dbReference type="GO" id="GO:0009347">
    <property type="term" value="C:aspartate carbamoyltransferase complex"/>
    <property type="evidence" value="ECO:0007669"/>
    <property type="project" value="InterPro"/>
</dbReference>
<dbReference type="GO" id="GO:0046872">
    <property type="term" value="F:metal ion binding"/>
    <property type="evidence" value="ECO:0007669"/>
    <property type="project" value="UniProtKB-KW"/>
</dbReference>
<dbReference type="GO" id="GO:0006207">
    <property type="term" value="P:'de novo' pyrimidine nucleobase biosynthetic process"/>
    <property type="evidence" value="ECO:0007669"/>
    <property type="project" value="InterPro"/>
</dbReference>
<dbReference type="GO" id="GO:0006221">
    <property type="term" value="P:pyrimidine nucleotide biosynthetic process"/>
    <property type="evidence" value="ECO:0007669"/>
    <property type="project" value="UniProtKB-UniRule"/>
</dbReference>
<dbReference type="FunFam" id="2.30.30.20:FF:000001">
    <property type="entry name" value="Aspartate carbamoyltransferase regulatory chain"/>
    <property type="match status" value="1"/>
</dbReference>
<dbReference type="FunFam" id="3.30.70.140:FF:000001">
    <property type="entry name" value="Aspartate carbamoyltransferase regulatory chain"/>
    <property type="match status" value="1"/>
</dbReference>
<dbReference type="Gene3D" id="2.30.30.20">
    <property type="entry name" value="Aspartate carbamoyltransferase regulatory subunit, C-terminal domain"/>
    <property type="match status" value="1"/>
</dbReference>
<dbReference type="Gene3D" id="3.30.70.140">
    <property type="entry name" value="Aspartate carbamoyltransferase regulatory subunit, N-terminal domain"/>
    <property type="match status" value="1"/>
</dbReference>
<dbReference type="HAMAP" id="MF_00002">
    <property type="entry name" value="Asp_carb_tr_reg"/>
    <property type="match status" value="1"/>
</dbReference>
<dbReference type="InterPro" id="IPR020545">
    <property type="entry name" value="Asp_carbamoyltransf_reg_N"/>
</dbReference>
<dbReference type="InterPro" id="IPR002801">
    <property type="entry name" value="Asp_carbamoylTrfase_reg"/>
</dbReference>
<dbReference type="InterPro" id="IPR020542">
    <property type="entry name" value="Asp_carbamoyltrfase_reg_C"/>
</dbReference>
<dbReference type="InterPro" id="IPR036792">
    <property type="entry name" value="Asp_carbatrfase_reg_C_sf"/>
</dbReference>
<dbReference type="InterPro" id="IPR036793">
    <property type="entry name" value="Asp_carbatrfase_reg_N_sf"/>
</dbReference>
<dbReference type="NCBIfam" id="TIGR00240">
    <property type="entry name" value="ATCase_reg"/>
    <property type="match status" value="1"/>
</dbReference>
<dbReference type="PANTHER" id="PTHR35805">
    <property type="entry name" value="ASPARTATE CARBAMOYLTRANSFERASE REGULATORY CHAIN"/>
    <property type="match status" value="1"/>
</dbReference>
<dbReference type="PANTHER" id="PTHR35805:SF1">
    <property type="entry name" value="ASPARTATE CARBAMOYLTRANSFERASE REGULATORY CHAIN"/>
    <property type="match status" value="1"/>
</dbReference>
<dbReference type="Pfam" id="PF01948">
    <property type="entry name" value="PyrI"/>
    <property type="match status" value="1"/>
</dbReference>
<dbReference type="Pfam" id="PF02748">
    <property type="entry name" value="PyrI_C"/>
    <property type="match status" value="1"/>
</dbReference>
<dbReference type="SUPFAM" id="SSF57825">
    <property type="entry name" value="Aspartate carbamoyltransferase, Regulatory-chain, C-terminal domain"/>
    <property type="match status" value="1"/>
</dbReference>
<dbReference type="SUPFAM" id="SSF54893">
    <property type="entry name" value="Aspartate carbamoyltransferase, Regulatory-chain, N-terminal domain"/>
    <property type="match status" value="1"/>
</dbReference>
<name>PYRI_SALAR</name>
<feature type="chain" id="PRO_1000073746" description="Aspartate carbamoyltransferase regulatory chain">
    <location>
        <begin position="1"/>
        <end position="153"/>
    </location>
</feature>
<feature type="binding site" evidence="1">
    <location>
        <position position="109"/>
    </location>
    <ligand>
        <name>Zn(2+)</name>
        <dbReference type="ChEBI" id="CHEBI:29105"/>
    </ligand>
</feature>
<feature type="binding site" evidence="1">
    <location>
        <position position="114"/>
    </location>
    <ligand>
        <name>Zn(2+)</name>
        <dbReference type="ChEBI" id="CHEBI:29105"/>
    </ligand>
</feature>
<feature type="binding site" evidence="1">
    <location>
        <position position="138"/>
    </location>
    <ligand>
        <name>Zn(2+)</name>
        <dbReference type="ChEBI" id="CHEBI:29105"/>
    </ligand>
</feature>
<feature type="binding site" evidence="1">
    <location>
        <position position="141"/>
    </location>
    <ligand>
        <name>Zn(2+)</name>
        <dbReference type="ChEBI" id="CHEBI:29105"/>
    </ligand>
</feature>
<proteinExistence type="inferred from homology"/>
<gene>
    <name evidence="1" type="primary">pyrI</name>
    <name type="ordered locus">SARI_03192</name>
</gene>
<protein>
    <recommendedName>
        <fullName evidence="1">Aspartate carbamoyltransferase regulatory chain</fullName>
    </recommendedName>
</protein>
<organism>
    <name type="scientific">Salmonella arizonae (strain ATCC BAA-731 / CDC346-86 / RSK2980)</name>
    <dbReference type="NCBI Taxonomy" id="41514"/>
    <lineage>
        <taxon>Bacteria</taxon>
        <taxon>Pseudomonadati</taxon>
        <taxon>Pseudomonadota</taxon>
        <taxon>Gammaproteobacteria</taxon>
        <taxon>Enterobacterales</taxon>
        <taxon>Enterobacteriaceae</taxon>
        <taxon>Salmonella</taxon>
    </lineage>
</organism>
<sequence>MTHDNKLQVEAIKCGTVIDHIPAQVGFKLLSLFKLTETEQRITIGLNLPSGEMGRKDLIKIENTFLTDEQVNQLALYAPQATVNRIDNYDVVGKSRPSLPERINNVLVCPNSNCISHAEPVSSCFAVKKRANDIALKCKYCEKEFSHNVVLAN</sequence>
<evidence type="ECO:0000255" key="1">
    <source>
        <dbReference type="HAMAP-Rule" id="MF_00002"/>
    </source>
</evidence>
<accession>A9MEW3</accession>
<reference key="1">
    <citation type="submission" date="2007-11" db="EMBL/GenBank/DDBJ databases">
        <authorList>
            <consortium name="The Salmonella enterica serovar Arizonae Genome Sequencing Project"/>
            <person name="McClelland M."/>
            <person name="Sanderson E.K."/>
            <person name="Porwollik S."/>
            <person name="Spieth J."/>
            <person name="Clifton W.S."/>
            <person name="Fulton R."/>
            <person name="Chunyan W."/>
            <person name="Wollam A."/>
            <person name="Shah N."/>
            <person name="Pepin K."/>
            <person name="Bhonagiri V."/>
            <person name="Nash W."/>
            <person name="Johnson M."/>
            <person name="Thiruvilangam P."/>
            <person name="Wilson R."/>
        </authorList>
    </citation>
    <scope>NUCLEOTIDE SEQUENCE [LARGE SCALE GENOMIC DNA]</scope>
    <source>
        <strain>ATCC BAA-731 / CDC346-86 / RSK2980</strain>
    </source>
</reference>
<keyword id="KW-0479">Metal-binding</keyword>
<keyword id="KW-0665">Pyrimidine biosynthesis</keyword>
<keyword id="KW-1185">Reference proteome</keyword>
<keyword id="KW-0862">Zinc</keyword>
<comment type="function">
    <text evidence="1">Involved in allosteric regulation of aspartate carbamoyltransferase.</text>
</comment>
<comment type="cofactor">
    <cofactor evidence="1">
        <name>Zn(2+)</name>
        <dbReference type="ChEBI" id="CHEBI:29105"/>
    </cofactor>
    <text evidence="1">Binds 1 zinc ion per subunit.</text>
</comment>
<comment type="subunit">
    <text evidence="1">Contains catalytic and regulatory chains.</text>
</comment>
<comment type="similarity">
    <text evidence="1">Belongs to the PyrI family.</text>
</comment>